<protein>
    <recommendedName>
        <fullName>Norrin</fullName>
    </recommendedName>
    <alternativeName>
        <fullName>Norrie disease protein homolog</fullName>
    </alternativeName>
</protein>
<evidence type="ECO:0000250" key="1"/>
<evidence type="ECO:0000250" key="2">
    <source>
        <dbReference type="UniProtKB" id="Q00604"/>
    </source>
</evidence>
<evidence type="ECO:0000255" key="3"/>
<evidence type="ECO:0000255" key="4">
    <source>
        <dbReference type="PROSITE-ProRule" id="PRU00039"/>
    </source>
</evidence>
<evidence type="ECO:0000269" key="5">
    <source>
    </source>
</evidence>
<evidence type="ECO:0000269" key="6">
    <source>
    </source>
</evidence>
<evidence type="ECO:0000269" key="7">
    <source>
    </source>
</evidence>
<comment type="function">
    <text evidence="6 7">Activates the canonical Wnt signaling pathway through FZD4 and LRP5 coreceptor. Plays a central role in retinal vascularization by acting as a ligand for FZD4 that signals via stabilizing beta-catenin (CTNNB1) and activating LEF/TCF-mediated transcriptional programs. Acts in concert with TSPAN12 to activate FZD4 independently of the Wnt-dependent activation of FZD4, suggesting the existence of a Wnt-independent signaling that also promote accumulation the beta-catenin (CTNNB1). May be involved in a pathway that regulates neural cell differentiation and proliferation. Possible role in neuroectodermal cell-cell interaction.</text>
</comment>
<comment type="subunit">
    <text evidence="2 6 7">Homodimer; disulfide-linked (By similarity). Component of a complex, at least composed of TSPAN12, FZD4, LRP5/6 and norrin (NDP). Binds FZD4 with high affinity. Interacts with LRP6 (via Beta-propellers 1 and 2).</text>
</comment>
<comment type="subcellular location">
    <subcellularLocation>
        <location evidence="1">Secreted</location>
    </subcellularLocation>
</comment>
<comment type="tissue specificity">
    <text evidence="5">Expressed in the outer nuclear, inner nuclear and ganglion cell layers of the retina.</text>
</comment>
<keyword id="KW-1015">Disulfide bond</keyword>
<keyword id="KW-1185">Reference proteome</keyword>
<keyword id="KW-0964">Secreted</keyword>
<keyword id="KW-0732">Signal</keyword>
<keyword id="KW-0879">Wnt signaling pathway</keyword>
<sequence length="131" mass="14700">MRNHVLAASISMLSLLAIMGDTDSKTDSSFLMDSQRCMRHHYVDSISHPLYKCSSKMVLLARCEGHCSQASRSEPLVSFSTVLKQPFRSSCHCCRPQTSKLKALRLRCSGGMRLTATYRYILSCHCEECSS</sequence>
<dbReference type="EMBL" id="X92397">
    <property type="protein sequence ID" value="CAA63134.1"/>
    <property type="molecule type" value="mRNA"/>
</dbReference>
<dbReference type="EMBL" id="X83794">
    <property type="protein sequence ID" value="CAA58725.1"/>
    <property type="molecule type" value="Genomic_DNA"/>
</dbReference>
<dbReference type="EMBL" id="AL732321">
    <property type="status" value="NOT_ANNOTATED_CDS"/>
    <property type="molecule type" value="Genomic_DNA"/>
</dbReference>
<dbReference type="EMBL" id="BC090623">
    <property type="protein sequence ID" value="AAH90623.1"/>
    <property type="molecule type" value="mRNA"/>
</dbReference>
<dbReference type="CCDS" id="CCDS30034.1"/>
<dbReference type="PIR" id="S55380">
    <property type="entry name" value="S55380"/>
</dbReference>
<dbReference type="RefSeq" id="NP_035013.1">
    <property type="nucleotide sequence ID" value="NM_010883.3"/>
</dbReference>
<dbReference type="SMR" id="P48744"/>
<dbReference type="BioGRID" id="201713">
    <property type="interactions" value="1"/>
</dbReference>
<dbReference type="FunCoup" id="P48744">
    <property type="interactions" value="150"/>
</dbReference>
<dbReference type="STRING" id="10090.ENSMUSP00000046692"/>
<dbReference type="ChEMBL" id="CHEMBL2176820"/>
<dbReference type="PhosphoSitePlus" id="P48744"/>
<dbReference type="jPOST" id="P48744"/>
<dbReference type="PaxDb" id="10090-ENSMUSP00000046692"/>
<dbReference type="ProteomicsDB" id="252866"/>
<dbReference type="Antibodypedia" id="514">
    <property type="antibodies" value="173 antibodies from 31 providers"/>
</dbReference>
<dbReference type="DNASU" id="17986"/>
<dbReference type="Ensembl" id="ENSMUST00000040134.8">
    <property type="protein sequence ID" value="ENSMUSP00000046692.8"/>
    <property type="gene ID" value="ENSMUSG00000040138.8"/>
</dbReference>
<dbReference type="GeneID" id="17986"/>
<dbReference type="KEGG" id="mmu:17986"/>
<dbReference type="UCSC" id="uc009ssc.1">
    <property type="organism name" value="mouse"/>
</dbReference>
<dbReference type="AGR" id="MGI:102570"/>
<dbReference type="CTD" id="4693"/>
<dbReference type="MGI" id="MGI:102570">
    <property type="gene designation" value="Ndp"/>
</dbReference>
<dbReference type="VEuPathDB" id="HostDB:ENSMUSG00000040138"/>
<dbReference type="eggNOG" id="KOG1216">
    <property type="taxonomic scope" value="Eukaryota"/>
</dbReference>
<dbReference type="GeneTree" id="ENSGT00390000004304"/>
<dbReference type="HOGENOM" id="CLU_153977_0_0_1"/>
<dbReference type="InParanoid" id="P48744"/>
<dbReference type="OMA" id="NVLMARC"/>
<dbReference type="OrthoDB" id="6059567at2759"/>
<dbReference type="PhylomeDB" id="P48744"/>
<dbReference type="BioGRID-ORCS" id="17986">
    <property type="hits" value="3 hits in 78 CRISPR screens"/>
</dbReference>
<dbReference type="PRO" id="PR:P48744"/>
<dbReference type="Proteomes" id="UP000000589">
    <property type="component" value="Chromosome X"/>
</dbReference>
<dbReference type="RNAct" id="P48744">
    <property type="molecule type" value="protein"/>
</dbReference>
<dbReference type="Bgee" id="ENSMUSG00000040138">
    <property type="expression patterns" value="Expressed in lumbar dorsal root ganglion and 72 other cell types or tissues"/>
</dbReference>
<dbReference type="GO" id="GO:0009986">
    <property type="term" value="C:cell surface"/>
    <property type="evidence" value="ECO:0007669"/>
    <property type="project" value="Ensembl"/>
</dbReference>
<dbReference type="GO" id="GO:0062023">
    <property type="term" value="C:collagen-containing extracellular matrix"/>
    <property type="evidence" value="ECO:0000314"/>
    <property type="project" value="BHF-UCL"/>
</dbReference>
<dbReference type="GO" id="GO:0005615">
    <property type="term" value="C:extracellular space"/>
    <property type="evidence" value="ECO:0007669"/>
    <property type="project" value="Ensembl"/>
</dbReference>
<dbReference type="GO" id="GO:0005125">
    <property type="term" value="F:cytokine activity"/>
    <property type="evidence" value="ECO:0000314"/>
    <property type="project" value="BHF-UCL"/>
</dbReference>
<dbReference type="GO" id="GO:0005109">
    <property type="term" value="F:frizzled binding"/>
    <property type="evidence" value="ECO:0000353"/>
    <property type="project" value="BHF-UCL"/>
</dbReference>
<dbReference type="GO" id="GO:0042803">
    <property type="term" value="F:protein homodimerization activity"/>
    <property type="evidence" value="ECO:0007669"/>
    <property type="project" value="Ensembl"/>
</dbReference>
<dbReference type="GO" id="GO:0001508">
    <property type="term" value="P:action potential"/>
    <property type="evidence" value="ECO:0000315"/>
    <property type="project" value="MGI"/>
</dbReference>
<dbReference type="GO" id="GO:0001525">
    <property type="term" value="P:angiogenesis"/>
    <property type="evidence" value="ECO:0000315"/>
    <property type="project" value="MGI"/>
</dbReference>
<dbReference type="GO" id="GO:0001974">
    <property type="term" value="P:blood vessel remodeling"/>
    <property type="evidence" value="ECO:0000315"/>
    <property type="project" value="MGI"/>
</dbReference>
<dbReference type="GO" id="GO:0060070">
    <property type="term" value="P:canonical Wnt signaling pathway"/>
    <property type="evidence" value="ECO:0000314"/>
    <property type="project" value="MGI"/>
</dbReference>
<dbReference type="GO" id="GO:0008283">
    <property type="term" value="P:cell population proliferation"/>
    <property type="evidence" value="ECO:0000314"/>
    <property type="project" value="MGI"/>
</dbReference>
<dbReference type="GO" id="GO:0071456">
    <property type="term" value="P:cellular response to hypoxia"/>
    <property type="evidence" value="ECO:0000315"/>
    <property type="project" value="MGI"/>
</dbReference>
<dbReference type="GO" id="GO:1904390">
    <property type="term" value="P:cone retinal bipolar cell differentiation"/>
    <property type="evidence" value="ECO:0000315"/>
    <property type="project" value="MGI"/>
</dbReference>
<dbReference type="GO" id="GO:0046697">
    <property type="term" value="P:decidualization"/>
    <property type="evidence" value="ECO:0007669"/>
    <property type="project" value="Ensembl"/>
</dbReference>
<dbReference type="GO" id="GO:0016358">
    <property type="term" value="P:dendrite development"/>
    <property type="evidence" value="ECO:0000315"/>
    <property type="project" value="MGI"/>
</dbReference>
<dbReference type="GO" id="GO:0060996">
    <property type="term" value="P:dendritic spine development"/>
    <property type="evidence" value="ECO:0000315"/>
    <property type="project" value="MGI"/>
</dbReference>
<dbReference type="GO" id="GO:0045446">
    <property type="term" value="P:endothelial cell differentiation"/>
    <property type="evidence" value="ECO:0000315"/>
    <property type="project" value="MGI"/>
</dbReference>
<dbReference type="GO" id="GO:0060856">
    <property type="term" value="P:establishment of blood-brain barrier"/>
    <property type="evidence" value="ECO:0000315"/>
    <property type="project" value="MGI"/>
</dbReference>
<dbReference type="GO" id="GO:1990963">
    <property type="term" value="P:establishment of blood-retinal barrier"/>
    <property type="evidence" value="ECO:0000315"/>
    <property type="project" value="MGI"/>
</dbReference>
<dbReference type="GO" id="GO:0035640">
    <property type="term" value="P:exploration behavior"/>
    <property type="evidence" value="ECO:0000315"/>
    <property type="project" value="MGI"/>
</dbReference>
<dbReference type="GO" id="GO:0035426">
    <property type="term" value="P:extracellular matrix-cell signaling"/>
    <property type="evidence" value="ECO:0000314"/>
    <property type="project" value="BHF-UCL"/>
</dbReference>
<dbReference type="GO" id="GO:0010467">
    <property type="term" value="P:gene expression"/>
    <property type="evidence" value="ECO:0000314"/>
    <property type="project" value="MGI"/>
</dbReference>
<dbReference type="GO" id="GO:0006749">
    <property type="term" value="P:glutathione metabolic process"/>
    <property type="evidence" value="ECO:0000315"/>
    <property type="project" value="MGI"/>
</dbReference>
<dbReference type="GO" id="GO:0006544">
    <property type="term" value="P:glycine metabolic process"/>
    <property type="evidence" value="ECO:0000315"/>
    <property type="project" value="MGI"/>
</dbReference>
<dbReference type="GO" id="GO:0006954">
    <property type="term" value="P:inflammatory response"/>
    <property type="evidence" value="ECO:0000315"/>
    <property type="project" value="MGI"/>
</dbReference>
<dbReference type="GO" id="GO:0006563">
    <property type="term" value="P:L-serine metabolic process"/>
    <property type="evidence" value="ECO:0000315"/>
    <property type="project" value="MGI"/>
</dbReference>
<dbReference type="GO" id="GO:0002088">
    <property type="term" value="P:lens development in camera-type eye"/>
    <property type="evidence" value="ECO:0000314"/>
    <property type="project" value="MGI"/>
</dbReference>
<dbReference type="GO" id="GO:0014004">
    <property type="term" value="P:microglia differentiation"/>
    <property type="evidence" value="ECO:0000315"/>
    <property type="project" value="MGI"/>
</dbReference>
<dbReference type="GO" id="GO:0061518">
    <property type="term" value="P:microglial cell proliferation"/>
    <property type="evidence" value="ECO:0000315"/>
    <property type="project" value="MGI"/>
</dbReference>
<dbReference type="GO" id="GO:0000278">
    <property type="term" value="P:mitotic cell cycle"/>
    <property type="evidence" value="ECO:0000315"/>
    <property type="project" value="MGI"/>
</dbReference>
<dbReference type="GO" id="GO:0003407">
    <property type="term" value="P:neural retina development"/>
    <property type="evidence" value="ECO:0000314"/>
    <property type="project" value="MGI"/>
</dbReference>
<dbReference type="GO" id="GO:0051402">
    <property type="term" value="P:neuron apoptotic process"/>
    <property type="evidence" value="ECO:0000314"/>
    <property type="project" value="MGI"/>
</dbReference>
<dbReference type="GO" id="GO:0030182">
    <property type="term" value="P:neuron differentiation"/>
    <property type="evidence" value="ECO:0000315"/>
    <property type="project" value="MGI"/>
</dbReference>
<dbReference type="GO" id="GO:0110135">
    <property type="term" value="P:Norrin signaling pathway"/>
    <property type="evidence" value="ECO:0000314"/>
    <property type="project" value="BHF-UCL"/>
</dbReference>
<dbReference type="GO" id="GO:0021554">
    <property type="term" value="P:optic nerve development"/>
    <property type="evidence" value="ECO:0000314"/>
    <property type="project" value="MGI"/>
</dbReference>
<dbReference type="GO" id="GO:0001890">
    <property type="term" value="P:placenta development"/>
    <property type="evidence" value="ECO:0000315"/>
    <property type="project" value="MGI"/>
</dbReference>
<dbReference type="GO" id="GO:0051897">
    <property type="term" value="P:positive regulation of phosphatidylinositol 3-kinase/protein kinase B signal transduction"/>
    <property type="evidence" value="ECO:0000314"/>
    <property type="project" value="MGI"/>
</dbReference>
<dbReference type="GO" id="GO:0045944">
    <property type="term" value="P:positive regulation of transcription by RNA polymerase II"/>
    <property type="evidence" value="ECO:0000314"/>
    <property type="project" value="BHF-UCL"/>
</dbReference>
<dbReference type="GO" id="GO:0008104">
    <property type="term" value="P:protein localization"/>
    <property type="evidence" value="ECO:0000315"/>
    <property type="project" value="MGI"/>
</dbReference>
<dbReference type="GO" id="GO:0006622">
    <property type="term" value="P:protein targeting to lysosome"/>
    <property type="evidence" value="ECO:0000315"/>
    <property type="project" value="MGI"/>
</dbReference>
<dbReference type="GO" id="GO:0016567">
    <property type="term" value="P:protein ubiquitination"/>
    <property type="evidence" value="ECO:0000315"/>
    <property type="project" value="MGI"/>
</dbReference>
<dbReference type="GO" id="GO:0000320">
    <property type="term" value="P:re-entry into mitotic cell cycle"/>
    <property type="evidence" value="ECO:0000314"/>
    <property type="project" value="MGI"/>
</dbReference>
<dbReference type="GO" id="GO:0048678">
    <property type="term" value="P:response to axon injury"/>
    <property type="evidence" value="ECO:0000314"/>
    <property type="project" value="MGI"/>
</dbReference>
<dbReference type="GO" id="GO:0001666">
    <property type="term" value="P:response to hypoxia"/>
    <property type="evidence" value="ECO:0000315"/>
    <property type="project" value="MGI"/>
</dbReference>
<dbReference type="GO" id="GO:0097601">
    <property type="term" value="P:retina blood vessel maintenance"/>
    <property type="evidence" value="ECO:0000315"/>
    <property type="project" value="MGI"/>
</dbReference>
<dbReference type="GO" id="GO:0060041">
    <property type="term" value="P:retina development in camera-type eye"/>
    <property type="evidence" value="ECO:0000315"/>
    <property type="project" value="MGI"/>
</dbReference>
<dbReference type="GO" id="GO:0010842">
    <property type="term" value="P:retina layer formation"/>
    <property type="evidence" value="ECO:0000315"/>
    <property type="project" value="MGI"/>
</dbReference>
<dbReference type="GO" id="GO:0060042">
    <property type="term" value="P:retina morphogenesis in camera-type eye"/>
    <property type="evidence" value="ECO:0000314"/>
    <property type="project" value="MGI"/>
</dbReference>
<dbReference type="GO" id="GO:0061298">
    <property type="term" value="P:retina vasculature development in camera-type eye"/>
    <property type="evidence" value="ECO:0000314"/>
    <property type="project" value="MGI"/>
</dbReference>
<dbReference type="GO" id="GO:0061299">
    <property type="term" value="P:retina vasculature morphogenesis in camera-type eye"/>
    <property type="evidence" value="ECO:0000315"/>
    <property type="project" value="MGI"/>
</dbReference>
<dbReference type="GO" id="GO:0061304">
    <property type="term" value="P:retinal blood vessel morphogenesis"/>
    <property type="evidence" value="ECO:0000315"/>
    <property type="project" value="MGI"/>
</dbReference>
<dbReference type="GO" id="GO:0031290">
    <property type="term" value="P:retinal ganglion cell axon guidance"/>
    <property type="evidence" value="ECO:0000314"/>
    <property type="project" value="MGI"/>
</dbReference>
<dbReference type="GO" id="GO:0003406">
    <property type="term" value="P:retinal pigment epithelium development"/>
    <property type="evidence" value="ECO:0000315"/>
    <property type="project" value="MGI"/>
</dbReference>
<dbReference type="GO" id="GO:0060221">
    <property type="term" value="P:retinal rod cell differentiation"/>
    <property type="evidence" value="ECO:0000315"/>
    <property type="project" value="MGI"/>
</dbReference>
<dbReference type="GO" id="GO:0007224">
    <property type="term" value="P:smoothened signaling pathway"/>
    <property type="evidence" value="ECO:0000314"/>
    <property type="project" value="MGI"/>
</dbReference>
<dbReference type="GO" id="GO:0006366">
    <property type="term" value="P:transcription by RNA polymerase II"/>
    <property type="evidence" value="ECO:0000315"/>
    <property type="project" value="MGI"/>
</dbReference>
<dbReference type="GO" id="GO:0007179">
    <property type="term" value="P:transforming growth factor beta receptor signaling pathway"/>
    <property type="evidence" value="ECO:0000314"/>
    <property type="project" value="MGI"/>
</dbReference>
<dbReference type="GO" id="GO:0006099">
    <property type="term" value="P:tricarboxylic acid cycle"/>
    <property type="evidence" value="ECO:0000315"/>
    <property type="project" value="MGI"/>
</dbReference>
<dbReference type="GO" id="GO:0070086">
    <property type="term" value="P:ubiquitin-dependent endocytosis"/>
    <property type="evidence" value="ECO:0000315"/>
    <property type="project" value="MGI"/>
</dbReference>
<dbReference type="FunFam" id="2.10.90.10:FF:000022">
    <property type="entry name" value="Norrin"/>
    <property type="match status" value="1"/>
</dbReference>
<dbReference type="Gene3D" id="2.10.90.10">
    <property type="entry name" value="Cystine-knot cytokines"/>
    <property type="match status" value="1"/>
</dbReference>
<dbReference type="InterPro" id="IPR006207">
    <property type="entry name" value="Cys_knot_C"/>
</dbReference>
<dbReference type="InterPro" id="IPR029034">
    <property type="entry name" value="Cystine-knot_cytokine"/>
</dbReference>
<dbReference type="InterPro" id="IPR004133">
    <property type="entry name" value="DAN"/>
</dbReference>
<dbReference type="InterPro" id="IPR003064">
    <property type="entry name" value="Norrie_dis"/>
</dbReference>
<dbReference type="PANTHER" id="PTHR28611">
    <property type="entry name" value="NORRIN"/>
    <property type="match status" value="1"/>
</dbReference>
<dbReference type="PANTHER" id="PTHR28611:SF1">
    <property type="entry name" value="NORRIN"/>
    <property type="match status" value="1"/>
</dbReference>
<dbReference type="Pfam" id="PF03045">
    <property type="entry name" value="DAN"/>
    <property type="match status" value="1"/>
</dbReference>
<dbReference type="PRINTS" id="PR01304">
    <property type="entry name" value="NORRIEDSEASE"/>
</dbReference>
<dbReference type="SMART" id="SM00041">
    <property type="entry name" value="CT"/>
    <property type="match status" value="1"/>
</dbReference>
<dbReference type="PROSITE" id="PS01185">
    <property type="entry name" value="CTCK_1"/>
    <property type="match status" value="1"/>
</dbReference>
<dbReference type="PROSITE" id="PS01225">
    <property type="entry name" value="CTCK_2"/>
    <property type="match status" value="1"/>
</dbReference>
<gene>
    <name type="primary">Ndp</name>
    <name type="synonym">Ndph</name>
</gene>
<organism>
    <name type="scientific">Mus musculus</name>
    <name type="common">Mouse</name>
    <dbReference type="NCBI Taxonomy" id="10090"/>
    <lineage>
        <taxon>Eukaryota</taxon>
        <taxon>Metazoa</taxon>
        <taxon>Chordata</taxon>
        <taxon>Craniata</taxon>
        <taxon>Vertebrata</taxon>
        <taxon>Euteleostomi</taxon>
        <taxon>Mammalia</taxon>
        <taxon>Eutheria</taxon>
        <taxon>Euarchontoglires</taxon>
        <taxon>Glires</taxon>
        <taxon>Rodentia</taxon>
        <taxon>Myomorpha</taxon>
        <taxon>Muroidea</taxon>
        <taxon>Muridae</taxon>
        <taxon>Murinae</taxon>
        <taxon>Mus</taxon>
        <taxon>Mus</taxon>
    </lineage>
</organism>
<proteinExistence type="evidence at protein level"/>
<feature type="signal peptide" evidence="3">
    <location>
        <begin position="1"/>
        <end position="24"/>
    </location>
</feature>
<feature type="chain" id="PRO_0000021796" description="Norrin">
    <location>
        <begin position="25"/>
        <end position="131"/>
    </location>
</feature>
<feature type="domain" description="CTCK" evidence="4">
    <location>
        <begin position="37"/>
        <end position="130"/>
    </location>
</feature>
<feature type="disulfide bond" evidence="2">
    <location>
        <begin position="37"/>
        <end position="94"/>
    </location>
</feature>
<feature type="disulfide bond" evidence="2">
    <location>
        <begin position="53"/>
        <end position="108"/>
    </location>
</feature>
<feature type="disulfide bond" evidence="2">
    <location>
        <begin position="63"/>
        <end position="124"/>
    </location>
</feature>
<feature type="disulfide bond" evidence="2">
    <location>
        <begin position="67"/>
        <end position="126"/>
    </location>
</feature>
<feature type="disulfide bond" description="Interchain (with C-93)" evidence="2">
    <location>
        <position position="91"/>
    </location>
</feature>
<feature type="disulfide bond" description="Interchain (with C-91)" evidence="2">
    <location>
        <position position="93"/>
    </location>
</feature>
<feature type="disulfide bond" description="Interchain" evidence="2">
    <location>
        <position position="129"/>
    </location>
</feature>
<name>NDP_MOUSE</name>
<accession>P48744</accession>
<accession>Q5CZY6</accession>
<reference key="1">
    <citation type="journal article" date="1996" name="Hum. Mol. Genet.">
        <title>An animal model for Norrie disease (ND): gene targeting of the mouse ND gene.</title>
        <authorList>
            <person name="Berger W."/>
            <person name="van de Pol D."/>
            <person name="Baechner D."/>
            <person name="Oerlemans F."/>
            <person name="Winkens H."/>
            <person name="Hameister H."/>
            <person name="Wieringa B."/>
            <person name="Hendriks W."/>
            <person name="Ropers H.-H."/>
        </authorList>
    </citation>
    <scope>NUCLEOTIDE SEQUENCE [MRNA]</scope>
    <source>
        <strain>C57BL/6J</strain>
        <tissue>Brain</tissue>
    </source>
</reference>
<reference key="2">
    <citation type="journal article" date="1996" name="Mamm. Genome">
        <title>Characterization and mapping of the mouse NDP (Norrie disease) locus (Ndp).</title>
        <authorList>
            <person name="Battinelli E.M."/>
            <person name="Boyd Y."/>
            <person name="Craig I.W."/>
            <person name="Breakefield X.O."/>
            <person name="Chen Z.Y."/>
        </authorList>
    </citation>
    <scope>NUCLEOTIDE SEQUENCE [GENOMIC DNA]</scope>
    <source>
        <strain>L129</strain>
    </source>
</reference>
<reference key="3">
    <citation type="submission" date="2007-07" db="EMBL/GenBank/DDBJ databases">
        <authorList>
            <person name="Wood J."/>
        </authorList>
    </citation>
    <scope>NUCLEOTIDE SEQUENCE [GENOMIC DNA]</scope>
</reference>
<reference key="4">
    <citation type="journal article" date="2004" name="Genome Res.">
        <title>The status, quality, and expansion of the NIH full-length cDNA project: the Mammalian Gene Collection (MGC).</title>
        <authorList>
            <consortium name="The MGC Project Team"/>
        </authorList>
    </citation>
    <scope>NUCLEOTIDE SEQUENCE [LARGE SCALE MRNA]</scope>
    <source>
        <strain>C57BL/6J</strain>
        <tissue>Brain</tissue>
    </source>
</reference>
<reference key="5">
    <citation type="journal article" date="1999" name="Brain Res. Bull.">
        <title>Localization of the Norrie disease gene mRNA by in situ hybridization.</title>
        <authorList>
            <person name="Hartzer M.K."/>
            <person name="Cheng M."/>
            <person name="Liu X."/>
            <person name="Shastry B.S."/>
        </authorList>
    </citation>
    <scope>TISSUE SPECIFICITY</scope>
</reference>
<reference key="6">
    <citation type="journal article" date="2004" name="Cell">
        <title>Vascular development in the retina and inner ear: control by Norrin and Frizzled-4, a high-affinity ligand-receptor pair.</title>
        <authorList>
            <person name="Xu Q."/>
            <person name="Wang Y."/>
            <person name="Dabdoub A."/>
            <person name="Smallwood P.M."/>
            <person name="Williams J."/>
            <person name="Woods C."/>
            <person name="Kelley M.W."/>
            <person name="Jiang L."/>
            <person name="Tasman W."/>
            <person name="Zhang K."/>
            <person name="Nathans J."/>
        </authorList>
    </citation>
    <scope>FUNCTION</scope>
    <scope>INTERACTION WITH TO FZD4</scope>
</reference>
<reference key="7">
    <citation type="journal article" date="2009" name="Cell">
        <title>TSPAN12 regulates retinal vascular development by promoting Norrin-but not Wnt-induced FZD4/beta-catenin signaling.</title>
        <authorList>
            <person name="Junge H.J."/>
            <person name="Yang S."/>
            <person name="Burton J.B."/>
            <person name="Paes K."/>
            <person name="Shu X."/>
            <person name="French D.M."/>
            <person name="Costa M."/>
            <person name="Rice D.S."/>
            <person name="Ye W."/>
        </authorList>
    </citation>
    <scope>FUNCTION</scope>
    <scope>IDENTIFICATION IN A COMPLEX WITH FZD4 AND TSPAN12</scope>
</reference>